<sequence>MLRWMTAGESHGPALVAVLEGMVAGVEVTTADIAAELERRKLGFGRSPRMNFEADELEIIGGVRHGRTQGGPVAVRIANTEWPKWEQVMAADPVDPDVLASLARNEPLTRPRPGHADLAGMQKYGFEESRPVLERASARETAARVAVGTVARHFLRQLLGVEILSHVVSLGGVSAESDHLPGPDDLKAIDDNPVRAFGDAATERMMAEVDAAKKDGDTLGGVVEVIAYGLPPGIGSHVHWDRKLDARLAGALMSIQAIKGVEIGEGFANAHRRGSAAHDEIYPAEGERWVRRGSNRAGGLEGGITNGEPLVVRAAKKPISSLPRALATVDVVTGEPAQAMHQRSDITAVPRAAVVAETMVALVLAEAVLEKFGGDSLPETRRNVEGYLAGLRERAEKRQVR</sequence>
<dbReference type="EC" id="4.2.3.5" evidence="1"/>
<dbReference type="EMBL" id="AM420293">
    <property type="protein sequence ID" value="CAM01371.1"/>
    <property type="molecule type" value="Genomic_DNA"/>
</dbReference>
<dbReference type="RefSeq" id="WP_009943057.1">
    <property type="nucleotide sequence ID" value="NC_009142.1"/>
</dbReference>
<dbReference type="SMR" id="A4FBE6"/>
<dbReference type="STRING" id="405948.SACE_2065"/>
<dbReference type="KEGG" id="sen:SACE_2065"/>
<dbReference type="eggNOG" id="COG0082">
    <property type="taxonomic scope" value="Bacteria"/>
</dbReference>
<dbReference type="HOGENOM" id="CLU_034547_2_0_11"/>
<dbReference type="OrthoDB" id="9771806at2"/>
<dbReference type="UniPathway" id="UPA00053">
    <property type="reaction ID" value="UER00090"/>
</dbReference>
<dbReference type="Proteomes" id="UP000006728">
    <property type="component" value="Chromosome"/>
</dbReference>
<dbReference type="GO" id="GO:0005829">
    <property type="term" value="C:cytosol"/>
    <property type="evidence" value="ECO:0007669"/>
    <property type="project" value="TreeGrafter"/>
</dbReference>
<dbReference type="GO" id="GO:0004107">
    <property type="term" value="F:chorismate synthase activity"/>
    <property type="evidence" value="ECO:0007669"/>
    <property type="project" value="UniProtKB-UniRule"/>
</dbReference>
<dbReference type="GO" id="GO:0010181">
    <property type="term" value="F:FMN binding"/>
    <property type="evidence" value="ECO:0007669"/>
    <property type="project" value="TreeGrafter"/>
</dbReference>
<dbReference type="GO" id="GO:0008652">
    <property type="term" value="P:amino acid biosynthetic process"/>
    <property type="evidence" value="ECO:0007669"/>
    <property type="project" value="UniProtKB-KW"/>
</dbReference>
<dbReference type="GO" id="GO:0009073">
    <property type="term" value="P:aromatic amino acid family biosynthetic process"/>
    <property type="evidence" value="ECO:0007669"/>
    <property type="project" value="UniProtKB-KW"/>
</dbReference>
<dbReference type="GO" id="GO:0009423">
    <property type="term" value="P:chorismate biosynthetic process"/>
    <property type="evidence" value="ECO:0007669"/>
    <property type="project" value="UniProtKB-UniRule"/>
</dbReference>
<dbReference type="CDD" id="cd07304">
    <property type="entry name" value="Chorismate_synthase"/>
    <property type="match status" value="1"/>
</dbReference>
<dbReference type="FunFam" id="3.60.150.10:FF:000002">
    <property type="entry name" value="Chorismate synthase"/>
    <property type="match status" value="1"/>
</dbReference>
<dbReference type="Gene3D" id="3.60.150.10">
    <property type="entry name" value="Chorismate synthase AroC"/>
    <property type="match status" value="1"/>
</dbReference>
<dbReference type="HAMAP" id="MF_00300">
    <property type="entry name" value="Chorismate_synth"/>
    <property type="match status" value="1"/>
</dbReference>
<dbReference type="InterPro" id="IPR000453">
    <property type="entry name" value="Chorismate_synth"/>
</dbReference>
<dbReference type="InterPro" id="IPR035904">
    <property type="entry name" value="Chorismate_synth_AroC_sf"/>
</dbReference>
<dbReference type="InterPro" id="IPR020541">
    <property type="entry name" value="Chorismate_synthase_CS"/>
</dbReference>
<dbReference type="NCBIfam" id="TIGR00033">
    <property type="entry name" value="aroC"/>
    <property type="match status" value="1"/>
</dbReference>
<dbReference type="NCBIfam" id="NF003793">
    <property type="entry name" value="PRK05382.1"/>
    <property type="match status" value="1"/>
</dbReference>
<dbReference type="PANTHER" id="PTHR21085">
    <property type="entry name" value="CHORISMATE SYNTHASE"/>
    <property type="match status" value="1"/>
</dbReference>
<dbReference type="PANTHER" id="PTHR21085:SF0">
    <property type="entry name" value="CHORISMATE SYNTHASE"/>
    <property type="match status" value="1"/>
</dbReference>
<dbReference type="Pfam" id="PF01264">
    <property type="entry name" value="Chorismate_synt"/>
    <property type="match status" value="1"/>
</dbReference>
<dbReference type="PIRSF" id="PIRSF001456">
    <property type="entry name" value="Chorismate_synth"/>
    <property type="match status" value="1"/>
</dbReference>
<dbReference type="SUPFAM" id="SSF103263">
    <property type="entry name" value="Chorismate synthase, AroC"/>
    <property type="match status" value="1"/>
</dbReference>
<dbReference type="PROSITE" id="PS00787">
    <property type="entry name" value="CHORISMATE_SYNTHASE_1"/>
    <property type="match status" value="1"/>
</dbReference>
<dbReference type="PROSITE" id="PS00788">
    <property type="entry name" value="CHORISMATE_SYNTHASE_2"/>
    <property type="match status" value="1"/>
</dbReference>
<organism>
    <name type="scientific">Saccharopolyspora erythraea (strain ATCC 11635 / DSM 40517 / JCM 4748 / NBRC 13426 / NCIMB 8594 / NRRL 2338)</name>
    <dbReference type="NCBI Taxonomy" id="405948"/>
    <lineage>
        <taxon>Bacteria</taxon>
        <taxon>Bacillati</taxon>
        <taxon>Actinomycetota</taxon>
        <taxon>Actinomycetes</taxon>
        <taxon>Pseudonocardiales</taxon>
        <taxon>Pseudonocardiaceae</taxon>
        <taxon>Saccharopolyspora</taxon>
    </lineage>
</organism>
<protein>
    <recommendedName>
        <fullName evidence="1">Chorismate synthase</fullName>
        <shortName evidence="1">CS</shortName>
        <ecNumber evidence="1">4.2.3.5</ecNumber>
    </recommendedName>
    <alternativeName>
        <fullName evidence="1">5-enolpyruvylshikimate-3-phosphate phospholyase</fullName>
    </alternativeName>
</protein>
<feature type="chain" id="PRO_0000322421" description="Chorismate synthase">
    <location>
        <begin position="1"/>
        <end position="401"/>
    </location>
</feature>
<feature type="binding site" evidence="1">
    <location>
        <position position="40"/>
    </location>
    <ligand>
        <name>NADP(+)</name>
        <dbReference type="ChEBI" id="CHEBI:58349"/>
    </ligand>
</feature>
<feature type="binding site" evidence="1">
    <location>
        <position position="46"/>
    </location>
    <ligand>
        <name>NADP(+)</name>
        <dbReference type="ChEBI" id="CHEBI:58349"/>
    </ligand>
</feature>
<feature type="binding site" evidence="1">
    <location>
        <begin position="135"/>
        <end position="137"/>
    </location>
    <ligand>
        <name>FMN</name>
        <dbReference type="ChEBI" id="CHEBI:58210"/>
    </ligand>
</feature>
<feature type="binding site" evidence="1">
    <location>
        <begin position="256"/>
        <end position="257"/>
    </location>
    <ligand>
        <name>FMN</name>
        <dbReference type="ChEBI" id="CHEBI:58210"/>
    </ligand>
</feature>
<feature type="binding site" evidence="1">
    <location>
        <position position="302"/>
    </location>
    <ligand>
        <name>FMN</name>
        <dbReference type="ChEBI" id="CHEBI:58210"/>
    </ligand>
</feature>
<feature type="binding site" evidence="1">
    <location>
        <begin position="317"/>
        <end position="321"/>
    </location>
    <ligand>
        <name>FMN</name>
        <dbReference type="ChEBI" id="CHEBI:58210"/>
    </ligand>
</feature>
<feature type="binding site" evidence="1">
    <location>
        <position position="343"/>
    </location>
    <ligand>
        <name>FMN</name>
        <dbReference type="ChEBI" id="CHEBI:58210"/>
    </ligand>
</feature>
<gene>
    <name evidence="1" type="primary">aroC</name>
    <name type="ordered locus">SACE_2065</name>
</gene>
<reference key="1">
    <citation type="journal article" date="2007" name="Nat. Biotechnol.">
        <title>Complete genome sequence of the erythromycin-producing bacterium Saccharopolyspora erythraea NRRL23338.</title>
        <authorList>
            <person name="Oliynyk M."/>
            <person name="Samborskyy M."/>
            <person name="Lester J.B."/>
            <person name="Mironenko T."/>
            <person name="Scott N."/>
            <person name="Dickens S."/>
            <person name="Haydock S.F."/>
            <person name="Leadlay P.F."/>
        </authorList>
    </citation>
    <scope>NUCLEOTIDE SEQUENCE [LARGE SCALE GENOMIC DNA]</scope>
    <source>
        <strain>ATCC 11635 / DSM 40517 / JCM 4748 / NBRC 13426 / NCIMB 8594 / NRRL 2338</strain>
    </source>
</reference>
<evidence type="ECO:0000255" key="1">
    <source>
        <dbReference type="HAMAP-Rule" id="MF_00300"/>
    </source>
</evidence>
<proteinExistence type="inferred from homology"/>
<keyword id="KW-0028">Amino-acid biosynthesis</keyword>
<keyword id="KW-0057">Aromatic amino acid biosynthesis</keyword>
<keyword id="KW-0274">FAD</keyword>
<keyword id="KW-0285">Flavoprotein</keyword>
<keyword id="KW-0288">FMN</keyword>
<keyword id="KW-0456">Lyase</keyword>
<keyword id="KW-0521">NADP</keyword>
<keyword id="KW-1185">Reference proteome</keyword>
<name>AROC_SACEN</name>
<accession>A4FBE6</accession>
<comment type="function">
    <text evidence="1">Catalyzes the anti-1,4-elimination of the C-3 phosphate and the C-6 proR hydrogen from 5-enolpyruvylshikimate-3-phosphate (EPSP) to yield chorismate, which is the branch point compound that serves as the starting substrate for the three terminal pathways of aromatic amino acid biosynthesis. This reaction introduces a second double bond into the aromatic ring system.</text>
</comment>
<comment type="catalytic activity">
    <reaction evidence="1">
        <text>5-O-(1-carboxyvinyl)-3-phosphoshikimate = chorismate + phosphate</text>
        <dbReference type="Rhea" id="RHEA:21020"/>
        <dbReference type="ChEBI" id="CHEBI:29748"/>
        <dbReference type="ChEBI" id="CHEBI:43474"/>
        <dbReference type="ChEBI" id="CHEBI:57701"/>
        <dbReference type="EC" id="4.2.3.5"/>
    </reaction>
</comment>
<comment type="cofactor">
    <cofactor evidence="1">
        <name>FMNH2</name>
        <dbReference type="ChEBI" id="CHEBI:57618"/>
    </cofactor>
    <text evidence="1">Reduced FMN (FMNH(2)).</text>
</comment>
<comment type="pathway">
    <text evidence="1">Metabolic intermediate biosynthesis; chorismate biosynthesis; chorismate from D-erythrose 4-phosphate and phosphoenolpyruvate: step 7/7.</text>
</comment>
<comment type="subunit">
    <text evidence="1">Homotetramer.</text>
</comment>
<comment type="similarity">
    <text evidence="1">Belongs to the chorismate synthase family.</text>
</comment>